<keyword id="KW-0227">DNA damage</keyword>
<keyword id="KW-0234">DNA repair</keyword>
<keyword id="KW-0235">DNA replication</keyword>
<keyword id="KW-0436">Ligase</keyword>
<keyword id="KW-0460">Magnesium</keyword>
<keyword id="KW-0464">Manganese</keyword>
<keyword id="KW-0479">Metal-binding</keyword>
<keyword id="KW-0520">NAD</keyword>
<keyword id="KW-0862">Zinc</keyword>
<gene>
    <name evidence="1" type="primary">ligA</name>
    <name type="ordered locus">BHWA1_01986</name>
</gene>
<feature type="chain" id="PRO_0000380316" description="DNA ligase">
    <location>
        <begin position="1"/>
        <end position="663"/>
    </location>
</feature>
<feature type="domain" description="BRCT" evidence="1">
    <location>
        <begin position="585"/>
        <end position="663"/>
    </location>
</feature>
<feature type="active site" description="N6-AMP-lysine intermediate" evidence="1">
    <location>
        <position position="116"/>
    </location>
</feature>
<feature type="binding site" evidence="1">
    <location>
        <begin position="34"/>
        <end position="38"/>
    </location>
    <ligand>
        <name>NAD(+)</name>
        <dbReference type="ChEBI" id="CHEBI:57540"/>
    </ligand>
</feature>
<feature type="binding site" evidence="1">
    <location>
        <begin position="83"/>
        <end position="84"/>
    </location>
    <ligand>
        <name>NAD(+)</name>
        <dbReference type="ChEBI" id="CHEBI:57540"/>
    </ligand>
</feature>
<feature type="binding site" evidence="1">
    <location>
        <position position="114"/>
    </location>
    <ligand>
        <name>NAD(+)</name>
        <dbReference type="ChEBI" id="CHEBI:57540"/>
    </ligand>
</feature>
<feature type="binding site" evidence="1">
    <location>
        <position position="137"/>
    </location>
    <ligand>
        <name>NAD(+)</name>
        <dbReference type="ChEBI" id="CHEBI:57540"/>
    </ligand>
</feature>
<feature type="binding site" evidence="1">
    <location>
        <position position="171"/>
    </location>
    <ligand>
        <name>NAD(+)</name>
        <dbReference type="ChEBI" id="CHEBI:57540"/>
    </ligand>
</feature>
<feature type="binding site" evidence="1">
    <location>
        <position position="286"/>
    </location>
    <ligand>
        <name>NAD(+)</name>
        <dbReference type="ChEBI" id="CHEBI:57540"/>
    </ligand>
</feature>
<feature type="binding site" evidence="1">
    <location>
        <position position="310"/>
    </location>
    <ligand>
        <name>NAD(+)</name>
        <dbReference type="ChEBI" id="CHEBI:57540"/>
    </ligand>
</feature>
<feature type="binding site" evidence="1">
    <location>
        <position position="404"/>
    </location>
    <ligand>
        <name>Zn(2+)</name>
        <dbReference type="ChEBI" id="CHEBI:29105"/>
    </ligand>
</feature>
<feature type="binding site" evidence="1">
    <location>
        <position position="407"/>
    </location>
    <ligand>
        <name>Zn(2+)</name>
        <dbReference type="ChEBI" id="CHEBI:29105"/>
    </ligand>
</feature>
<feature type="binding site" evidence="1">
    <location>
        <position position="422"/>
    </location>
    <ligand>
        <name>Zn(2+)</name>
        <dbReference type="ChEBI" id="CHEBI:29105"/>
    </ligand>
</feature>
<feature type="binding site" evidence="1">
    <location>
        <position position="427"/>
    </location>
    <ligand>
        <name>Zn(2+)</name>
        <dbReference type="ChEBI" id="CHEBI:29105"/>
    </ligand>
</feature>
<accession>C0QVE5</accession>
<sequence>MNIEEAKQRIEQLTETINYHNKLYYTDDNPEIEDYEYDKLFRELENLEREFPELKKDDSPTNKVGGTILEKFEKFEHPIAMYSLSNVMNEEEFLEFDNRMQKELNQSKIKYTVENKFDGLALELIYEKGKLTVASTRGDGQVGENVTNNVKMMSNVPKSIKEKKKLIVRGEALITKKDFEALNKEREELEEIPFANARNAASGGLRQLDSAESKKRRLKFFAYQIANYKDFDLTNEYKSMEFLSELGFTVEGVHPNIDAKKVLETYYDIQEKRSKMDYEIDGLVIKVDDVKHQEKLGFLSRAPRFAVAFKFKPEEKETVLKNIEVQVGRTGALTPVAKLEPVQVGGVTVSNVTLHNPNEIKSKDIRIGDTVVVIRSGDVIPKITRVVLEKRTADSKPFEFPKKCPVCGGDTAVTDGDVIVRCINEECPSKITRYIEYFVSKPAMNMERIGKEWIAVFTKSGLVKTPADLYKITRDDLFKFERMGEKLAGYMLESIENSKNTTLKRFIYALGIRQVGETTADLLAKYFTSIENFKKATIDDLQNIEGIGEISAKSIYDFLHNEKTLKLIDDLLASGVNPVFEKVVTVESPLTGKNVVITGSIEGFTRNSAKEAAERLGATVQSAVSKNTNILIVGEKAGSKLKKAQDLGVEIMEADEFIKLANG</sequence>
<evidence type="ECO:0000255" key="1">
    <source>
        <dbReference type="HAMAP-Rule" id="MF_01588"/>
    </source>
</evidence>
<reference key="1">
    <citation type="journal article" date="2009" name="PLoS ONE">
        <title>Genome sequence of the pathogenic intestinal spirochete Brachyspira hyodysenteriae reveals adaptations to its lifestyle in the porcine large intestine.</title>
        <authorList>
            <person name="Bellgard M.I."/>
            <person name="Wanchanthuek P."/>
            <person name="La T."/>
            <person name="Ryan K."/>
            <person name="Moolhuijzen P."/>
            <person name="Albertyn Z."/>
            <person name="Shaban B."/>
            <person name="Motro Y."/>
            <person name="Dunn D.S."/>
            <person name="Schibeci D."/>
            <person name="Hunter A."/>
            <person name="Barrero R."/>
            <person name="Phillips N.D."/>
            <person name="Hampson D.J."/>
        </authorList>
    </citation>
    <scope>NUCLEOTIDE SEQUENCE [LARGE SCALE GENOMIC DNA]</scope>
    <source>
        <strain>ATCC 49526 / WA1</strain>
    </source>
</reference>
<comment type="function">
    <text evidence="1">DNA ligase that catalyzes the formation of phosphodiester linkages between 5'-phosphoryl and 3'-hydroxyl groups in double-stranded DNA using NAD as a coenzyme and as the energy source for the reaction. It is essential for DNA replication and repair of damaged DNA.</text>
</comment>
<comment type="catalytic activity">
    <reaction evidence="1">
        <text>NAD(+) + (deoxyribonucleotide)n-3'-hydroxyl + 5'-phospho-(deoxyribonucleotide)m = (deoxyribonucleotide)n+m + AMP + beta-nicotinamide D-nucleotide.</text>
        <dbReference type="EC" id="6.5.1.2"/>
    </reaction>
</comment>
<comment type="cofactor">
    <cofactor evidence="1">
        <name>Mg(2+)</name>
        <dbReference type="ChEBI" id="CHEBI:18420"/>
    </cofactor>
    <cofactor evidence="1">
        <name>Mn(2+)</name>
        <dbReference type="ChEBI" id="CHEBI:29035"/>
    </cofactor>
</comment>
<comment type="similarity">
    <text evidence="1">Belongs to the NAD-dependent DNA ligase family. LigA subfamily.</text>
</comment>
<organism>
    <name type="scientific">Brachyspira hyodysenteriae (strain ATCC 49526 / WA1)</name>
    <dbReference type="NCBI Taxonomy" id="565034"/>
    <lineage>
        <taxon>Bacteria</taxon>
        <taxon>Pseudomonadati</taxon>
        <taxon>Spirochaetota</taxon>
        <taxon>Spirochaetia</taxon>
        <taxon>Brachyspirales</taxon>
        <taxon>Brachyspiraceae</taxon>
        <taxon>Brachyspira</taxon>
    </lineage>
</organism>
<protein>
    <recommendedName>
        <fullName evidence="1">DNA ligase</fullName>
        <ecNumber evidence="1">6.5.1.2</ecNumber>
    </recommendedName>
    <alternativeName>
        <fullName evidence="1">Polydeoxyribonucleotide synthase [NAD(+)]</fullName>
    </alternativeName>
</protein>
<dbReference type="EC" id="6.5.1.2" evidence="1"/>
<dbReference type="EMBL" id="CP001357">
    <property type="protein sequence ID" value="ACN84446.1"/>
    <property type="molecule type" value="Genomic_DNA"/>
</dbReference>
<dbReference type="RefSeq" id="WP_012671485.1">
    <property type="nucleotide sequence ID" value="NC_012225.1"/>
</dbReference>
<dbReference type="SMR" id="C0QVE5"/>
<dbReference type="STRING" id="565034.BHWA1_01986"/>
<dbReference type="KEGG" id="bhy:BHWA1_01986"/>
<dbReference type="eggNOG" id="COG0272">
    <property type="taxonomic scope" value="Bacteria"/>
</dbReference>
<dbReference type="HOGENOM" id="CLU_007764_2_1_12"/>
<dbReference type="Proteomes" id="UP000001803">
    <property type="component" value="Chromosome"/>
</dbReference>
<dbReference type="GO" id="GO:0005829">
    <property type="term" value="C:cytosol"/>
    <property type="evidence" value="ECO:0007669"/>
    <property type="project" value="TreeGrafter"/>
</dbReference>
<dbReference type="GO" id="GO:0003677">
    <property type="term" value="F:DNA binding"/>
    <property type="evidence" value="ECO:0007669"/>
    <property type="project" value="InterPro"/>
</dbReference>
<dbReference type="GO" id="GO:0003911">
    <property type="term" value="F:DNA ligase (NAD+) activity"/>
    <property type="evidence" value="ECO:0007669"/>
    <property type="project" value="UniProtKB-UniRule"/>
</dbReference>
<dbReference type="GO" id="GO:0046872">
    <property type="term" value="F:metal ion binding"/>
    <property type="evidence" value="ECO:0007669"/>
    <property type="project" value="UniProtKB-KW"/>
</dbReference>
<dbReference type="GO" id="GO:0006281">
    <property type="term" value="P:DNA repair"/>
    <property type="evidence" value="ECO:0007669"/>
    <property type="project" value="UniProtKB-KW"/>
</dbReference>
<dbReference type="GO" id="GO:0006260">
    <property type="term" value="P:DNA replication"/>
    <property type="evidence" value="ECO:0007669"/>
    <property type="project" value="UniProtKB-KW"/>
</dbReference>
<dbReference type="CDD" id="cd17748">
    <property type="entry name" value="BRCT_DNA_ligase_like"/>
    <property type="match status" value="1"/>
</dbReference>
<dbReference type="CDD" id="cd00114">
    <property type="entry name" value="LIGANc"/>
    <property type="match status" value="1"/>
</dbReference>
<dbReference type="FunFam" id="1.10.150.20:FF:000006">
    <property type="entry name" value="DNA ligase"/>
    <property type="match status" value="1"/>
</dbReference>
<dbReference type="FunFam" id="1.10.287.610:FF:000002">
    <property type="entry name" value="DNA ligase"/>
    <property type="match status" value="1"/>
</dbReference>
<dbReference type="FunFam" id="2.40.50.140:FF:000012">
    <property type="entry name" value="DNA ligase"/>
    <property type="match status" value="1"/>
</dbReference>
<dbReference type="Gene3D" id="6.20.10.30">
    <property type="match status" value="1"/>
</dbReference>
<dbReference type="Gene3D" id="1.10.150.20">
    <property type="entry name" value="5' to 3' exonuclease, C-terminal subdomain"/>
    <property type="match status" value="2"/>
</dbReference>
<dbReference type="Gene3D" id="3.40.50.10190">
    <property type="entry name" value="BRCT domain"/>
    <property type="match status" value="1"/>
</dbReference>
<dbReference type="Gene3D" id="3.30.470.30">
    <property type="entry name" value="DNA ligase/mRNA capping enzyme"/>
    <property type="match status" value="1"/>
</dbReference>
<dbReference type="Gene3D" id="1.10.287.610">
    <property type="entry name" value="Helix hairpin bin"/>
    <property type="match status" value="1"/>
</dbReference>
<dbReference type="Gene3D" id="2.40.50.140">
    <property type="entry name" value="Nucleic acid-binding proteins"/>
    <property type="match status" value="1"/>
</dbReference>
<dbReference type="HAMAP" id="MF_01588">
    <property type="entry name" value="DNA_ligase_A"/>
    <property type="match status" value="1"/>
</dbReference>
<dbReference type="InterPro" id="IPR001357">
    <property type="entry name" value="BRCT_dom"/>
</dbReference>
<dbReference type="InterPro" id="IPR036420">
    <property type="entry name" value="BRCT_dom_sf"/>
</dbReference>
<dbReference type="InterPro" id="IPR041663">
    <property type="entry name" value="DisA/LigA_HHH"/>
</dbReference>
<dbReference type="InterPro" id="IPR001679">
    <property type="entry name" value="DNA_ligase"/>
</dbReference>
<dbReference type="InterPro" id="IPR018239">
    <property type="entry name" value="DNA_ligase_AS"/>
</dbReference>
<dbReference type="InterPro" id="IPR033136">
    <property type="entry name" value="DNA_ligase_CS"/>
</dbReference>
<dbReference type="InterPro" id="IPR013839">
    <property type="entry name" value="DNAligase_adenylation"/>
</dbReference>
<dbReference type="InterPro" id="IPR013840">
    <property type="entry name" value="DNAligase_N"/>
</dbReference>
<dbReference type="InterPro" id="IPR003583">
    <property type="entry name" value="Hlx-hairpin-Hlx_DNA-bd_motif"/>
</dbReference>
<dbReference type="InterPro" id="IPR012340">
    <property type="entry name" value="NA-bd_OB-fold"/>
</dbReference>
<dbReference type="InterPro" id="IPR004150">
    <property type="entry name" value="NAD_DNA_ligase_OB"/>
</dbReference>
<dbReference type="InterPro" id="IPR010994">
    <property type="entry name" value="RuvA_2-like"/>
</dbReference>
<dbReference type="NCBIfam" id="TIGR00575">
    <property type="entry name" value="dnlj"/>
    <property type="match status" value="1"/>
</dbReference>
<dbReference type="NCBIfam" id="NF005932">
    <property type="entry name" value="PRK07956.1"/>
    <property type="match status" value="1"/>
</dbReference>
<dbReference type="PANTHER" id="PTHR23389">
    <property type="entry name" value="CHROMOSOME TRANSMISSION FIDELITY FACTOR 18"/>
    <property type="match status" value="1"/>
</dbReference>
<dbReference type="PANTHER" id="PTHR23389:SF9">
    <property type="entry name" value="DNA LIGASE"/>
    <property type="match status" value="1"/>
</dbReference>
<dbReference type="Pfam" id="PF00533">
    <property type="entry name" value="BRCT"/>
    <property type="match status" value="1"/>
</dbReference>
<dbReference type="Pfam" id="PF01653">
    <property type="entry name" value="DNA_ligase_aden"/>
    <property type="match status" value="1"/>
</dbReference>
<dbReference type="Pfam" id="PF03120">
    <property type="entry name" value="DNA_ligase_OB"/>
    <property type="match status" value="1"/>
</dbReference>
<dbReference type="Pfam" id="PF12826">
    <property type="entry name" value="HHH_2"/>
    <property type="match status" value="1"/>
</dbReference>
<dbReference type="Pfam" id="PF22745">
    <property type="entry name" value="Nlig-Ia"/>
    <property type="match status" value="1"/>
</dbReference>
<dbReference type="PIRSF" id="PIRSF001604">
    <property type="entry name" value="LigA"/>
    <property type="match status" value="1"/>
</dbReference>
<dbReference type="SMART" id="SM00292">
    <property type="entry name" value="BRCT"/>
    <property type="match status" value="1"/>
</dbReference>
<dbReference type="SMART" id="SM00278">
    <property type="entry name" value="HhH1"/>
    <property type="match status" value="3"/>
</dbReference>
<dbReference type="SMART" id="SM00532">
    <property type="entry name" value="LIGANc"/>
    <property type="match status" value="1"/>
</dbReference>
<dbReference type="SUPFAM" id="SSF52113">
    <property type="entry name" value="BRCT domain"/>
    <property type="match status" value="1"/>
</dbReference>
<dbReference type="SUPFAM" id="SSF56091">
    <property type="entry name" value="DNA ligase/mRNA capping enzyme, catalytic domain"/>
    <property type="match status" value="1"/>
</dbReference>
<dbReference type="SUPFAM" id="SSF50249">
    <property type="entry name" value="Nucleic acid-binding proteins"/>
    <property type="match status" value="1"/>
</dbReference>
<dbReference type="SUPFAM" id="SSF47781">
    <property type="entry name" value="RuvA domain 2-like"/>
    <property type="match status" value="1"/>
</dbReference>
<dbReference type="PROSITE" id="PS50172">
    <property type="entry name" value="BRCT"/>
    <property type="match status" value="1"/>
</dbReference>
<dbReference type="PROSITE" id="PS01055">
    <property type="entry name" value="DNA_LIGASE_N1"/>
    <property type="match status" value="1"/>
</dbReference>
<dbReference type="PROSITE" id="PS01056">
    <property type="entry name" value="DNA_LIGASE_N2"/>
    <property type="match status" value="1"/>
</dbReference>
<name>DNLJ_BRAHW</name>
<proteinExistence type="inferred from homology"/>